<feature type="chain" id="PRO_0000217986" description="Photosystem II reaction center protein T">
    <location>
        <begin position="1"/>
        <end position="35"/>
    </location>
</feature>
<feature type="transmembrane region" description="Helical" evidence="1">
    <location>
        <begin position="3"/>
        <end position="23"/>
    </location>
</feature>
<geneLocation type="chloroplast"/>
<proteinExistence type="inferred from homology"/>
<comment type="function">
    <text evidence="1">Found at the monomer-monomer interface of the photosystem II (PS II) dimer, plays a role in assembly and dimerization of PSII. PSII is a light-driven water plastoquinone oxidoreductase, using light energy to abstract electrons from H(2)O, generating a proton gradient subsequently used for ATP formation.</text>
</comment>
<comment type="subunit">
    <text evidence="1">PSII is composed of 1 copy each of membrane proteins PsbA, PsbB, PsbC, PsbD, PsbE, PsbF, PsbH, PsbI, PsbJ, PsbK, PsbL, PsbM, PsbT, PsbY, PsbZ, Psb30/Ycf12, at least 3 peripheral proteins of the oxygen-evolving complex and a large number of cofactors. It forms dimeric complexes.</text>
</comment>
<comment type="subcellular location">
    <subcellularLocation>
        <location evidence="1">Plastid</location>
        <location evidence="1">Chloroplast thylakoid membrane</location>
        <topology evidence="1">Single-pass membrane protein</topology>
    </subcellularLocation>
</comment>
<comment type="similarity">
    <text evidence="1">Belongs to the PsbT family.</text>
</comment>
<protein>
    <recommendedName>
        <fullName evidence="1">Photosystem II reaction center protein T</fullName>
        <shortName evidence="1">PSII-T</shortName>
    </recommendedName>
</protein>
<gene>
    <name evidence="1" type="primary">psbT</name>
</gene>
<organism>
    <name type="scientific">Stangeria eriopus</name>
    <name type="common">Natal grass cycad</name>
    <name type="synonym">Lomaria eriopus</name>
    <dbReference type="NCBI Taxonomy" id="34343"/>
    <lineage>
        <taxon>Eukaryota</taxon>
        <taxon>Viridiplantae</taxon>
        <taxon>Streptophyta</taxon>
        <taxon>Embryophyta</taxon>
        <taxon>Tracheophyta</taxon>
        <taxon>Spermatophyta</taxon>
        <taxon>Cycadidae</taxon>
        <taxon>Cycadales</taxon>
        <taxon>Zamiaceae</taxon>
        <taxon>Stangeria</taxon>
    </lineage>
</organism>
<accession>Q71L87</accession>
<sequence length="35" mass="4004">MEALVYTFLLVSTLGIIFFAIFFREPPKVPDRGSK</sequence>
<reference key="1">
    <citation type="journal article" date="2003" name="Mol. Phylogenet. Evol.">
        <title>Inference of higher-order relationships in the cycads from a large chloroplast data set.</title>
        <authorList>
            <person name="Rai H.S."/>
            <person name="O'Brien H.E."/>
            <person name="Reeves P.A."/>
            <person name="Olmstead R.G."/>
            <person name="Graham S.W."/>
        </authorList>
    </citation>
    <scope>NUCLEOTIDE SEQUENCE [GENOMIC DNA]</scope>
</reference>
<keyword id="KW-0150">Chloroplast</keyword>
<keyword id="KW-0472">Membrane</keyword>
<keyword id="KW-0602">Photosynthesis</keyword>
<keyword id="KW-0604">Photosystem II</keyword>
<keyword id="KW-0934">Plastid</keyword>
<keyword id="KW-0793">Thylakoid</keyword>
<keyword id="KW-0812">Transmembrane</keyword>
<keyword id="KW-1133">Transmembrane helix</keyword>
<name>PSBT_STAER</name>
<dbReference type="EMBL" id="AF469712">
    <property type="protein sequence ID" value="AAQ18552.1"/>
    <property type="molecule type" value="Genomic_DNA"/>
</dbReference>
<dbReference type="RefSeq" id="YP_009113827.1">
    <property type="nucleotide sequence ID" value="NC_026041.1"/>
</dbReference>
<dbReference type="SMR" id="Q71L87"/>
<dbReference type="GeneID" id="23525940"/>
<dbReference type="GO" id="GO:0009535">
    <property type="term" value="C:chloroplast thylakoid membrane"/>
    <property type="evidence" value="ECO:0007669"/>
    <property type="project" value="UniProtKB-SubCell"/>
</dbReference>
<dbReference type="GO" id="GO:0009539">
    <property type="term" value="C:photosystem II reaction center"/>
    <property type="evidence" value="ECO:0007669"/>
    <property type="project" value="InterPro"/>
</dbReference>
<dbReference type="GO" id="GO:0015979">
    <property type="term" value="P:photosynthesis"/>
    <property type="evidence" value="ECO:0007669"/>
    <property type="project" value="UniProtKB-UniRule"/>
</dbReference>
<dbReference type="HAMAP" id="MF_00808">
    <property type="entry name" value="PSII_PsbT"/>
    <property type="match status" value="1"/>
</dbReference>
<dbReference type="InterPro" id="IPR001743">
    <property type="entry name" value="PSII_PsbT"/>
</dbReference>
<dbReference type="InterPro" id="IPR037268">
    <property type="entry name" value="PSII_PsbT_sf"/>
</dbReference>
<dbReference type="PANTHER" id="PTHR36411">
    <property type="match status" value="1"/>
</dbReference>
<dbReference type="PANTHER" id="PTHR36411:SF2">
    <property type="entry name" value="PHOTOSYSTEM II REACTION CENTER PROTEIN T"/>
    <property type="match status" value="1"/>
</dbReference>
<dbReference type="Pfam" id="PF01405">
    <property type="entry name" value="PsbT"/>
    <property type="match status" value="1"/>
</dbReference>
<dbReference type="SUPFAM" id="SSF161029">
    <property type="entry name" value="Photosystem II reaction center protein T, PsbT"/>
    <property type="match status" value="1"/>
</dbReference>
<evidence type="ECO:0000255" key="1">
    <source>
        <dbReference type="HAMAP-Rule" id="MF_00808"/>
    </source>
</evidence>